<sequence>MPTERKEDLHQQLKEIEKWEKDQQKVWFWEKLSRLPFQLLDKLTPEFIQKKIGKLLDEVGSFVQTGGQYLTSEKQIIRMFQKKLPEEIFESLEDIRKAPLPVMDEIAEGMGKNRTNAATVQGATTGVGGVFTLAADIPAVLGLSLKTLQDIAVAYGYDPKEKKERVFIVKCLQLTSADVVGKRSILQELKHYDQDRTYKNVASQIQGWREVVLGYRDTFGWKKLFQIVPVAGMVFGAAANRSTLNDITETGMMLYKKRRILERLKETEREME</sequence>
<organism>
    <name type="scientific">Bacillus subtilis (strain 168)</name>
    <dbReference type="NCBI Taxonomy" id="224308"/>
    <lineage>
        <taxon>Bacteria</taxon>
        <taxon>Bacillati</taxon>
        <taxon>Bacillota</taxon>
        <taxon>Bacilli</taxon>
        <taxon>Bacillales</taxon>
        <taxon>Bacillaceae</taxon>
        <taxon>Bacillus</taxon>
    </lineage>
</organism>
<dbReference type="EMBL" id="AB001488">
    <property type="protein sequence ID" value="BAA19276.1"/>
    <property type="molecule type" value="Genomic_DNA"/>
</dbReference>
<dbReference type="EMBL" id="AL009126">
    <property type="protein sequence ID" value="CAB12246.1"/>
    <property type="molecule type" value="Genomic_DNA"/>
</dbReference>
<dbReference type="PIR" id="D69770">
    <property type="entry name" value="D69770"/>
</dbReference>
<dbReference type="RefSeq" id="NP_388320.1">
    <property type="nucleotide sequence ID" value="NC_000964.3"/>
</dbReference>
<dbReference type="RefSeq" id="WP_003246628.1">
    <property type="nucleotide sequence ID" value="NZ_OZ025638.1"/>
</dbReference>
<dbReference type="SMR" id="P96596"/>
<dbReference type="FunCoup" id="P96596">
    <property type="interactions" value="79"/>
</dbReference>
<dbReference type="STRING" id="224308.BSU04390"/>
<dbReference type="PaxDb" id="224308-BSU04390"/>
<dbReference type="EnsemblBacteria" id="CAB12246">
    <property type="protein sequence ID" value="CAB12246"/>
    <property type="gene ID" value="BSU_04390"/>
</dbReference>
<dbReference type="GeneID" id="938238"/>
<dbReference type="KEGG" id="bsu:BSU04390"/>
<dbReference type="PATRIC" id="fig|224308.179.peg.465"/>
<dbReference type="eggNOG" id="COG2217">
    <property type="taxonomic scope" value="Bacteria"/>
</dbReference>
<dbReference type="InParanoid" id="P96596"/>
<dbReference type="OrthoDB" id="2737310at2"/>
<dbReference type="BioCyc" id="BSUB:BSU04390-MONOMER"/>
<dbReference type="Proteomes" id="UP000001570">
    <property type="component" value="Chromosome"/>
</dbReference>
<dbReference type="InterPro" id="IPR024787">
    <property type="entry name" value="EcsC"/>
</dbReference>
<dbReference type="PANTHER" id="PTHR41260">
    <property type="entry name" value="PROTEIN ECSC"/>
    <property type="match status" value="1"/>
</dbReference>
<dbReference type="PANTHER" id="PTHR41260:SF1">
    <property type="entry name" value="PROTEIN ECSC"/>
    <property type="match status" value="1"/>
</dbReference>
<dbReference type="Pfam" id="PF12787">
    <property type="entry name" value="EcsC"/>
    <property type="match status" value="1"/>
</dbReference>
<feature type="chain" id="PRO_0000049488" description="Uncharacterized protein YdbA">
    <location>
        <begin position="1"/>
        <end position="272"/>
    </location>
</feature>
<protein>
    <recommendedName>
        <fullName>Uncharacterized protein YdbA</fullName>
    </recommendedName>
</protein>
<gene>
    <name type="primary">ydbA</name>
    <name type="ordered locus">BSU04390</name>
</gene>
<proteinExistence type="predicted"/>
<keyword id="KW-1185">Reference proteome</keyword>
<name>YDBA_BACSU</name>
<accession>P96596</accession>
<reference key="1">
    <citation type="submission" date="1997-03" db="EMBL/GenBank/DDBJ databases">
        <title>A 148 kbp sequence of the region between 35 and 47 degree of the Bacillus subtilis genome.</title>
        <authorList>
            <person name="Kasahara Y."/>
            <person name="Nakai S."/>
            <person name="Lee S."/>
            <person name="Sadaie Y."/>
            <person name="Ogasawara N."/>
        </authorList>
    </citation>
    <scope>NUCLEOTIDE SEQUENCE [GENOMIC DNA]</scope>
    <source>
        <strain>168</strain>
    </source>
</reference>
<reference key="2">
    <citation type="journal article" date="1997" name="Nature">
        <title>The complete genome sequence of the Gram-positive bacterium Bacillus subtilis.</title>
        <authorList>
            <person name="Kunst F."/>
            <person name="Ogasawara N."/>
            <person name="Moszer I."/>
            <person name="Albertini A.M."/>
            <person name="Alloni G."/>
            <person name="Azevedo V."/>
            <person name="Bertero M.G."/>
            <person name="Bessieres P."/>
            <person name="Bolotin A."/>
            <person name="Borchert S."/>
            <person name="Borriss R."/>
            <person name="Boursier L."/>
            <person name="Brans A."/>
            <person name="Braun M."/>
            <person name="Brignell S.C."/>
            <person name="Bron S."/>
            <person name="Brouillet S."/>
            <person name="Bruschi C.V."/>
            <person name="Caldwell B."/>
            <person name="Capuano V."/>
            <person name="Carter N.M."/>
            <person name="Choi S.-K."/>
            <person name="Codani J.-J."/>
            <person name="Connerton I.F."/>
            <person name="Cummings N.J."/>
            <person name="Daniel R.A."/>
            <person name="Denizot F."/>
            <person name="Devine K.M."/>
            <person name="Duesterhoeft A."/>
            <person name="Ehrlich S.D."/>
            <person name="Emmerson P.T."/>
            <person name="Entian K.-D."/>
            <person name="Errington J."/>
            <person name="Fabret C."/>
            <person name="Ferrari E."/>
            <person name="Foulger D."/>
            <person name="Fritz C."/>
            <person name="Fujita M."/>
            <person name="Fujita Y."/>
            <person name="Fuma S."/>
            <person name="Galizzi A."/>
            <person name="Galleron N."/>
            <person name="Ghim S.-Y."/>
            <person name="Glaser P."/>
            <person name="Goffeau A."/>
            <person name="Golightly E.J."/>
            <person name="Grandi G."/>
            <person name="Guiseppi G."/>
            <person name="Guy B.J."/>
            <person name="Haga K."/>
            <person name="Haiech J."/>
            <person name="Harwood C.R."/>
            <person name="Henaut A."/>
            <person name="Hilbert H."/>
            <person name="Holsappel S."/>
            <person name="Hosono S."/>
            <person name="Hullo M.-F."/>
            <person name="Itaya M."/>
            <person name="Jones L.-M."/>
            <person name="Joris B."/>
            <person name="Karamata D."/>
            <person name="Kasahara Y."/>
            <person name="Klaerr-Blanchard M."/>
            <person name="Klein C."/>
            <person name="Kobayashi Y."/>
            <person name="Koetter P."/>
            <person name="Koningstein G."/>
            <person name="Krogh S."/>
            <person name="Kumano M."/>
            <person name="Kurita K."/>
            <person name="Lapidus A."/>
            <person name="Lardinois S."/>
            <person name="Lauber J."/>
            <person name="Lazarevic V."/>
            <person name="Lee S.-M."/>
            <person name="Levine A."/>
            <person name="Liu H."/>
            <person name="Masuda S."/>
            <person name="Mauel C."/>
            <person name="Medigue C."/>
            <person name="Medina N."/>
            <person name="Mellado R.P."/>
            <person name="Mizuno M."/>
            <person name="Moestl D."/>
            <person name="Nakai S."/>
            <person name="Noback M."/>
            <person name="Noone D."/>
            <person name="O'Reilly M."/>
            <person name="Ogawa K."/>
            <person name="Ogiwara A."/>
            <person name="Oudega B."/>
            <person name="Park S.-H."/>
            <person name="Parro V."/>
            <person name="Pohl T.M."/>
            <person name="Portetelle D."/>
            <person name="Porwollik S."/>
            <person name="Prescott A.M."/>
            <person name="Presecan E."/>
            <person name="Pujic P."/>
            <person name="Purnelle B."/>
            <person name="Rapoport G."/>
            <person name="Rey M."/>
            <person name="Reynolds S."/>
            <person name="Rieger M."/>
            <person name="Rivolta C."/>
            <person name="Rocha E."/>
            <person name="Roche B."/>
            <person name="Rose M."/>
            <person name="Sadaie Y."/>
            <person name="Sato T."/>
            <person name="Scanlan E."/>
            <person name="Schleich S."/>
            <person name="Schroeter R."/>
            <person name="Scoffone F."/>
            <person name="Sekiguchi J."/>
            <person name="Sekowska A."/>
            <person name="Seror S.J."/>
            <person name="Serror P."/>
            <person name="Shin B.-S."/>
            <person name="Soldo B."/>
            <person name="Sorokin A."/>
            <person name="Tacconi E."/>
            <person name="Takagi T."/>
            <person name="Takahashi H."/>
            <person name="Takemaru K."/>
            <person name="Takeuchi M."/>
            <person name="Tamakoshi A."/>
            <person name="Tanaka T."/>
            <person name="Terpstra P."/>
            <person name="Tognoni A."/>
            <person name="Tosato V."/>
            <person name="Uchiyama S."/>
            <person name="Vandenbol M."/>
            <person name="Vannier F."/>
            <person name="Vassarotti A."/>
            <person name="Viari A."/>
            <person name="Wambutt R."/>
            <person name="Wedler E."/>
            <person name="Wedler H."/>
            <person name="Weitzenegger T."/>
            <person name="Winters P."/>
            <person name="Wipat A."/>
            <person name="Yamamoto H."/>
            <person name="Yamane K."/>
            <person name="Yasumoto K."/>
            <person name="Yata K."/>
            <person name="Yoshida K."/>
            <person name="Yoshikawa H.-F."/>
            <person name="Zumstein E."/>
            <person name="Yoshikawa H."/>
            <person name="Danchin A."/>
        </authorList>
    </citation>
    <scope>NUCLEOTIDE SEQUENCE [LARGE SCALE GENOMIC DNA]</scope>
    <source>
        <strain>168</strain>
    </source>
</reference>